<organism>
    <name type="scientific">Homo sapiens</name>
    <name type="common">Human</name>
    <dbReference type="NCBI Taxonomy" id="9606"/>
    <lineage>
        <taxon>Eukaryota</taxon>
        <taxon>Metazoa</taxon>
        <taxon>Chordata</taxon>
        <taxon>Craniata</taxon>
        <taxon>Vertebrata</taxon>
        <taxon>Euteleostomi</taxon>
        <taxon>Mammalia</taxon>
        <taxon>Eutheria</taxon>
        <taxon>Euarchontoglires</taxon>
        <taxon>Primates</taxon>
        <taxon>Haplorrhini</taxon>
        <taxon>Catarrhini</taxon>
        <taxon>Hominidae</taxon>
        <taxon>Homo</taxon>
    </lineage>
</organism>
<protein>
    <recommendedName>
        <fullName evidence="9">Sushi domain-containing protein 6</fullName>
    </recommendedName>
    <alternativeName>
        <fullName evidence="7">Drug-activated gene overexpressed protein</fullName>
    </alternativeName>
</protein>
<accession>Q92537</accession>
<keyword id="KW-1015">Disulfide bond</keyword>
<keyword id="KW-0472">Membrane</keyword>
<keyword id="KW-1267">Proteomics identification</keyword>
<keyword id="KW-1185">Reference proteome</keyword>
<keyword id="KW-0732">Signal</keyword>
<keyword id="KW-0768">Sushi</keyword>
<keyword id="KW-0812">Transmembrane</keyword>
<keyword id="KW-1133">Transmembrane helix</keyword>
<keyword id="KW-0043">Tumor suppressor</keyword>
<name>SUSD6_HUMAN</name>
<feature type="signal peptide" evidence="2">
    <location>
        <begin position="1"/>
        <end position="39"/>
    </location>
</feature>
<feature type="chain" id="PRO_0000013985" description="Sushi domain-containing protein 6">
    <location>
        <begin position="40"/>
        <end position="303"/>
    </location>
</feature>
<feature type="topological domain" description="Extracellular" evidence="2">
    <location>
        <begin position="40"/>
        <end position="120"/>
    </location>
</feature>
<feature type="transmembrane region" description="Helical" evidence="2">
    <location>
        <begin position="121"/>
        <end position="141"/>
    </location>
</feature>
<feature type="topological domain" description="Cytoplasmic" evidence="2">
    <location>
        <begin position="142"/>
        <end position="303"/>
    </location>
</feature>
<feature type="domain" description="Sushi" evidence="3">
    <location>
        <begin position="40"/>
        <end position="104"/>
    </location>
</feature>
<feature type="region of interest" description="Disordered" evidence="4">
    <location>
        <begin position="199"/>
        <end position="237"/>
    </location>
</feature>
<feature type="region of interest" description="Disordered" evidence="4">
    <location>
        <begin position="263"/>
        <end position="282"/>
    </location>
</feature>
<feature type="disulfide bond" evidence="3">
    <location>
        <begin position="42"/>
        <end position="89"/>
    </location>
</feature>
<feature type="disulfide bond" evidence="3">
    <location>
        <begin position="74"/>
        <end position="102"/>
    </location>
</feature>
<reference key="1">
    <citation type="journal article" date="1996" name="DNA Res.">
        <title>Prediction of the coding sequences of unidentified human genes. VI. The coding sequences of 80 new genes (KIAA0201-KIAA0280) deduced by analysis of cDNA clones from cell line KG-1 and brain.</title>
        <authorList>
            <person name="Nagase T."/>
            <person name="Seki N."/>
            <person name="Ishikawa K."/>
            <person name="Ohira M."/>
            <person name="Kawarabayasi Y."/>
            <person name="Ohara O."/>
            <person name="Tanaka A."/>
            <person name="Kotani H."/>
            <person name="Miyajima N."/>
            <person name="Nomura N."/>
        </authorList>
    </citation>
    <scope>NUCLEOTIDE SEQUENCE [LARGE SCALE MRNA]</scope>
    <source>
        <tissue>Bone marrow</tissue>
    </source>
</reference>
<reference key="2">
    <citation type="journal article" date="2004" name="Genome Res.">
        <title>The status, quality, and expansion of the NIH full-length cDNA project: the Mammalian Gene Collection (MGC).</title>
        <authorList>
            <consortium name="The MGC Project Team"/>
        </authorList>
    </citation>
    <scope>NUCLEOTIDE SEQUENCE [LARGE SCALE MRNA]</scope>
    <source>
        <tissue>Placenta</tissue>
    </source>
</reference>
<reference key="3">
    <citation type="journal article" date="2010" name="Cell. Immunol.">
        <title>Characterization of SVEP1, KIAA, and SRPX2 in an in vitro cell culture model of endotoxemia.</title>
        <authorList>
            <person name="Schwanzer-Pfeiffer D."/>
            <person name="Rossmanith E."/>
            <person name="Schildberger A."/>
            <person name="Falkenhagen D."/>
        </authorList>
    </citation>
    <scope>FUNCTION</scope>
    <scope>INDUCTION</scope>
</reference>
<reference key="4">
    <citation type="journal article" date="2014" name="J. Natl. Cancer Inst.">
        <title>DRAGO (KIAA0247), a new DNA damage-responsive, p53-inducible gene that cooperates with p53 as oncosuppressor. [Corrected].</title>
        <authorList>
            <person name="Polato F."/>
            <person name="Rusconi P."/>
            <person name="Zangrossi S."/>
            <person name="Morelli F."/>
            <person name="Boeri M."/>
            <person name="Musi A."/>
            <person name="Marchini S."/>
            <person name="Castiglioni V."/>
            <person name="Scanziani E."/>
            <person name="Torri V."/>
            <person name="Broggini M."/>
        </authorList>
    </citation>
    <scope>FUNCTION</scope>
    <scope>INDUCTION</scope>
</reference>
<evidence type="ECO:0000250" key="1">
    <source>
        <dbReference type="UniProtKB" id="Q8BGE4"/>
    </source>
</evidence>
<evidence type="ECO:0000255" key="2"/>
<evidence type="ECO:0000255" key="3">
    <source>
        <dbReference type="PROSITE-ProRule" id="PRU00302"/>
    </source>
</evidence>
<evidence type="ECO:0000256" key="4">
    <source>
        <dbReference type="SAM" id="MobiDB-lite"/>
    </source>
</evidence>
<evidence type="ECO:0000269" key="5">
    <source>
    </source>
</evidence>
<evidence type="ECO:0000269" key="6">
    <source>
    </source>
</evidence>
<evidence type="ECO:0000303" key="7">
    <source>
    </source>
</evidence>
<evidence type="ECO:0000305" key="8"/>
<evidence type="ECO:0000312" key="9">
    <source>
        <dbReference type="HGNC" id="HGNC:19956"/>
    </source>
</evidence>
<dbReference type="EMBL" id="D87434">
    <property type="protein sequence ID" value="BAA13378.2"/>
    <property type="status" value="ALT_INIT"/>
    <property type="molecule type" value="mRNA"/>
</dbReference>
<dbReference type="EMBL" id="BC064697">
    <property type="protein sequence ID" value="AAH64697.1"/>
    <property type="molecule type" value="mRNA"/>
</dbReference>
<dbReference type="CCDS" id="CCDS9796.1"/>
<dbReference type="RefSeq" id="NP_055549.1">
    <property type="nucleotide sequence ID" value="NM_014734.4"/>
</dbReference>
<dbReference type="RefSeq" id="XP_011535714.1">
    <property type="nucleotide sequence ID" value="XM_011537412.1"/>
</dbReference>
<dbReference type="RefSeq" id="XP_016877327.1">
    <property type="nucleotide sequence ID" value="XM_017021838.1"/>
</dbReference>
<dbReference type="RefSeq" id="XP_016877328.1">
    <property type="nucleotide sequence ID" value="XM_017021839.1"/>
</dbReference>
<dbReference type="BioGRID" id="115112">
    <property type="interactions" value="21"/>
</dbReference>
<dbReference type="FunCoup" id="Q92537">
    <property type="interactions" value="94"/>
</dbReference>
<dbReference type="IntAct" id="Q92537">
    <property type="interactions" value="14"/>
</dbReference>
<dbReference type="MINT" id="Q92537"/>
<dbReference type="STRING" id="9606.ENSP00000344424"/>
<dbReference type="iPTMnet" id="Q92537"/>
<dbReference type="PhosphoSitePlus" id="Q92537"/>
<dbReference type="BioMuta" id="SUSD6"/>
<dbReference type="DMDM" id="2495723"/>
<dbReference type="jPOST" id="Q92537"/>
<dbReference type="MassIVE" id="Q92537"/>
<dbReference type="PaxDb" id="9606-ENSP00000344424"/>
<dbReference type="PeptideAtlas" id="Q92537"/>
<dbReference type="ProteomicsDB" id="75295"/>
<dbReference type="Antibodypedia" id="25061">
    <property type="antibodies" value="69 antibodies from 18 providers"/>
</dbReference>
<dbReference type="DNASU" id="9766"/>
<dbReference type="Ensembl" id="ENST00000342745.5">
    <property type="protein sequence ID" value="ENSP00000344424.4"/>
    <property type="gene ID" value="ENSG00000100647.8"/>
</dbReference>
<dbReference type="GeneID" id="9766"/>
<dbReference type="KEGG" id="hsa:9766"/>
<dbReference type="MANE-Select" id="ENST00000342745.5">
    <property type="protein sequence ID" value="ENSP00000344424.4"/>
    <property type="RefSeq nucleotide sequence ID" value="NM_014734.4"/>
    <property type="RefSeq protein sequence ID" value="NP_055549.1"/>
</dbReference>
<dbReference type="UCSC" id="uc001xlk.4">
    <property type="organism name" value="human"/>
</dbReference>
<dbReference type="AGR" id="HGNC:19956"/>
<dbReference type="CTD" id="9766"/>
<dbReference type="DisGeNET" id="9766"/>
<dbReference type="GeneCards" id="SUSD6"/>
<dbReference type="HGNC" id="HGNC:19956">
    <property type="gene designation" value="SUSD6"/>
</dbReference>
<dbReference type="HPA" id="ENSG00000100647">
    <property type="expression patterns" value="Low tissue specificity"/>
</dbReference>
<dbReference type="neXtProt" id="NX_Q92537"/>
<dbReference type="OpenTargets" id="ENSG00000100647"/>
<dbReference type="PharmGKB" id="PA128394557"/>
<dbReference type="VEuPathDB" id="HostDB:ENSG00000100647"/>
<dbReference type="eggNOG" id="ENOG502QYTF">
    <property type="taxonomic scope" value="Eukaryota"/>
</dbReference>
<dbReference type="GeneTree" id="ENSGT00940000157120"/>
<dbReference type="HOGENOM" id="CLU_044351_0_1_1"/>
<dbReference type="InParanoid" id="Q92537"/>
<dbReference type="OMA" id="GHASGCQ"/>
<dbReference type="OrthoDB" id="9050236at2759"/>
<dbReference type="PAN-GO" id="Q92537">
    <property type="GO annotations" value="1 GO annotation based on evolutionary models"/>
</dbReference>
<dbReference type="PhylomeDB" id="Q92537"/>
<dbReference type="TreeFam" id="TF332459"/>
<dbReference type="PathwayCommons" id="Q92537"/>
<dbReference type="SignaLink" id="Q92537"/>
<dbReference type="BioGRID-ORCS" id="9766">
    <property type="hits" value="13 hits in 1155 CRISPR screens"/>
</dbReference>
<dbReference type="ChiTaRS" id="SUSD6">
    <property type="organism name" value="human"/>
</dbReference>
<dbReference type="GenomeRNAi" id="9766"/>
<dbReference type="Pharos" id="Q92537">
    <property type="development level" value="Tbio"/>
</dbReference>
<dbReference type="PRO" id="PR:Q92537"/>
<dbReference type="Proteomes" id="UP000005640">
    <property type="component" value="Chromosome 14"/>
</dbReference>
<dbReference type="RNAct" id="Q92537">
    <property type="molecule type" value="protein"/>
</dbReference>
<dbReference type="Bgee" id="ENSG00000100647">
    <property type="expression patterns" value="Expressed in epithelium of nasopharynx and 200 other cell types or tissues"/>
</dbReference>
<dbReference type="GO" id="GO:0016020">
    <property type="term" value="C:membrane"/>
    <property type="evidence" value="ECO:0007669"/>
    <property type="project" value="UniProtKB-SubCell"/>
</dbReference>
<dbReference type="GO" id="GO:0006974">
    <property type="term" value="P:DNA damage response"/>
    <property type="evidence" value="ECO:0000314"/>
    <property type="project" value="UniProtKB"/>
</dbReference>
<dbReference type="CDD" id="cd00033">
    <property type="entry name" value="CCP"/>
    <property type="match status" value="1"/>
</dbReference>
<dbReference type="FunFam" id="2.10.70.10:FF:000030">
    <property type="entry name" value="Sushi domain-containing protein 4"/>
    <property type="match status" value="1"/>
</dbReference>
<dbReference type="Gene3D" id="2.10.70.10">
    <property type="entry name" value="Complement Module, domain 1"/>
    <property type="match status" value="1"/>
</dbReference>
<dbReference type="InterPro" id="IPR042866">
    <property type="entry name" value="SUSD6"/>
</dbReference>
<dbReference type="InterPro" id="IPR035976">
    <property type="entry name" value="Sushi/SCR/CCP_sf"/>
</dbReference>
<dbReference type="InterPro" id="IPR000436">
    <property type="entry name" value="Sushi_SCR_CCP_dom"/>
</dbReference>
<dbReference type="PANTHER" id="PTHR46839">
    <property type="entry name" value="SUSHI DOMAIN-CONTAINING PROTEIN 6"/>
    <property type="match status" value="1"/>
</dbReference>
<dbReference type="PANTHER" id="PTHR46839:SF2">
    <property type="entry name" value="SUSHI DOMAIN-CONTAINING PROTEIN 6"/>
    <property type="match status" value="1"/>
</dbReference>
<dbReference type="Pfam" id="PF00084">
    <property type="entry name" value="Sushi"/>
    <property type="match status" value="1"/>
</dbReference>
<dbReference type="SMART" id="SM00032">
    <property type="entry name" value="CCP"/>
    <property type="match status" value="1"/>
</dbReference>
<dbReference type="SUPFAM" id="SSF57535">
    <property type="entry name" value="Complement control module/SCR domain"/>
    <property type="match status" value="1"/>
</dbReference>
<dbReference type="PROSITE" id="PS50923">
    <property type="entry name" value="SUSHI"/>
    <property type="match status" value="1"/>
</dbReference>
<gene>
    <name evidence="9" type="primary">SUSD6</name>
    <name evidence="7" type="synonym">DRAGO</name>
    <name evidence="9" type="synonym">KIAA0247</name>
</gene>
<sequence length="303" mass="32090">MCHGRIAPKSTSVFAVASVGHGVFLPLVILCTLLGDGLASVCPLPPEPENGGYICHPRPCRDPLTAGSVIEYLCAEGYMLKGDYKYLTCKNGEWKPAMEISCRLNEDKDTHTSLGVPTLSIVASTASSVALILLLVVLFVLLQPKLKSFHHSRRDQGVSGDQVSIMVDGVQVALPSYEEAVYGSSGHCVPPADPRVQIVLSEGSGPSGRSVPREQQLPDQGACSSAGGEDEAPGQSGLCEAWGSRASETVMVHQATTSSWVAGSGNRQLAHKETADSENSDIQSLLSLTSEEYTDDIPLLKEA</sequence>
<comment type="function">
    <text evidence="1 5 6">May play a role in growth-suppressive activity and cell death (PubMed:24652652). May be involved in the production of chemokine molecules in umbilical vein endothelial cells (HUVECs) cultured in THP1 monocyte LPS-induced medium (PubMed:20236627). Plays a role in preventing tumor onset (By similarity).</text>
</comment>
<comment type="interaction">
    <interactant intactId="EBI-2866213">
        <id>Q92537</id>
    </interactant>
    <interactant intactId="EBI-10173507">
        <id>Q6UY14-3</id>
        <label>ADAMTSL4</label>
    </interactant>
    <organismsDiffer>false</organismsDiffer>
    <experiments>3</experiments>
</comment>
<comment type="interaction">
    <interactant intactId="EBI-2866213">
        <id>Q92537</id>
    </interactant>
    <interactant intactId="EBI-740086">
        <id>Q96GG9</id>
        <label>DCUN1D1</label>
    </interactant>
    <organismsDiffer>false</organismsDiffer>
    <experiments>3</experiments>
</comment>
<comment type="interaction">
    <interactant intactId="EBI-2866213">
        <id>Q92537</id>
    </interactant>
    <interactant intactId="EBI-12118888">
        <id>Q96D05-2</id>
        <label>FAM241B</label>
    </interactant>
    <organismsDiffer>false</organismsDiffer>
    <experiments>3</experiments>
</comment>
<comment type="interaction">
    <interactant intactId="EBI-2866213">
        <id>Q92537</id>
    </interactant>
    <interactant intactId="EBI-11749135">
        <id>Q8IUG1</id>
        <label>KRTAP1-3</label>
    </interactant>
    <organismsDiffer>false</organismsDiffer>
    <experiments>3</experiments>
</comment>
<comment type="interaction">
    <interactant intactId="EBI-2866213">
        <id>Q92537</id>
    </interactant>
    <interactant intactId="EBI-10171774">
        <id>P60410</id>
        <label>KRTAP10-8</label>
    </interactant>
    <organismsDiffer>false</organismsDiffer>
    <experiments>6</experiments>
</comment>
<comment type="interaction">
    <interactant intactId="EBI-2866213">
        <id>Q92537</id>
    </interactant>
    <interactant intactId="EBI-11980301">
        <id>Q8N3F0</id>
        <label>MTURN</label>
    </interactant>
    <organismsDiffer>false</organismsDiffer>
    <experiments>3</experiments>
</comment>
<comment type="interaction">
    <interactant intactId="EBI-2866213">
        <id>Q92537</id>
    </interactant>
    <interactant intactId="EBI-750730">
        <id>Q96BN8</id>
        <label>OTULIN</label>
    </interactant>
    <organismsDiffer>false</organismsDiffer>
    <experiments>3</experiments>
</comment>
<comment type="interaction">
    <interactant intactId="EBI-2866213">
        <id>Q92537</id>
    </interactant>
    <interactant intactId="EBI-741829">
        <id>Q96HH6</id>
        <label>TMEM19</label>
    </interactant>
    <organismsDiffer>false</organismsDiffer>
    <experiments>3</experiments>
</comment>
<comment type="interaction">
    <interactant intactId="EBI-2866213">
        <id>Q92537</id>
    </interactant>
    <interactant intactId="EBI-1993899">
        <id>Q9BZV1</id>
        <label>UBXN6</label>
    </interactant>
    <organismsDiffer>false</organismsDiffer>
    <experiments>3</experiments>
</comment>
<comment type="subcellular location">
    <subcellularLocation>
        <location evidence="8">Membrane</location>
        <topology evidence="8">Single-pass type I membrane protein</topology>
    </subcellularLocation>
</comment>
<comment type="induction">
    <text evidence="5 6">Up-regulated by chemotherapeutic DNA-damaging agents and by p53/TP53 and/or by p73/TP73 in response to cytotoxic insults (PubMed:24652652). Up-regulated by lipopolysaccharide (LPS) in monocytic THP1 cells (PubMed:20236627). Up-regulated in umbilical vein endothelial cells (HUVECs) cultured in THP1 monocyte LPS-induced medium.</text>
</comment>
<comment type="sequence caution" evidence="8">
    <conflict type="erroneous initiation">
        <sequence resource="EMBL-CDS" id="BAA13378"/>
    </conflict>
</comment>
<proteinExistence type="evidence at protein level"/>